<evidence type="ECO:0000255" key="1">
    <source>
        <dbReference type="HAMAP-Rule" id="MF_01324"/>
    </source>
</evidence>
<keyword id="KW-0150">Chloroplast</keyword>
<keyword id="KW-0240">DNA-directed RNA polymerase</keyword>
<keyword id="KW-0479">Metal-binding</keyword>
<keyword id="KW-0548">Nucleotidyltransferase</keyword>
<keyword id="KW-0934">Plastid</keyword>
<keyword id="KW-0804">Transcription</keyword>
<keyword id="KW-0808">Transferase</keyword>
<keyword id="KW-0862">Zinc</keyword>
<sequence length="1362" mass="154464">MEVLMAERPTQVFHNKVIDGTAMKRLISRFIDHYGIGYTSHILDQVKTLGFRQATAASISLGIDDLLTIPSKRWLVQDAEQQSVLLEKHHHYGNVHAVEKLRQSIEIWYATSEYLRQEMTPNFRMTDPFNPVHIMSFSGARGNASQVHQLVGMRGLMSDPQGQMIDLPIQSNLREGLSLTEYIISCYGARKGVVDTAIRTSDAGYLTRRLVEVVQHIVVRRTDCGTVRGISVSPRNGMMADRIFIQTLIGRVLADDIYIGSRCIATRNQDIGVGLVNRFITFRAQPISIRTPFTCRSTSWICQLCYGRSPAHDDLVELGEAVGIIAGQSIGEPGTQLTLRTFHTGGVFTGGTAEHVRAPFNGKIKFNEDLVHPTRTRHGHPAFLCSRDLYVTIESEDIIHNVCIPPKSFLLVQNDQYVESEQVIAEIRARTSTLNLKEKVRKHIYSDSEGEMHWNTDVYHAPEFTYGNIHLLPKTSHLWILLGEPWRSSLGPCSIHKDQDQMNAYSLSVKRRYISNPSVTNNQVRHKFFSSYFSGKNKKGDRIPDYSELNRMTCTGRCNLRYPGILDGNSDLLAKRRRNRVIIPLDSIQEGENQLIPSSGISIEIPRNGILRRNSILAYFDDPRYIRKSSGLTKYETRELNSIVNEENLVEYRGVKVFWPKYQKEVNPFFFIPVEVHILAESSSIMVRHNSIIGVDTQITLNRRSRVGGLVRVKKKAEKIKLIIFSGDIHFPGKTNKAFRLIPPGGGKQNSKEYKKLKNWLYIQRMKLSRYEKKYFVLVQPVVPYKKTDGINLGRLFPADLLQESDNLQLRVVNYILYYDPILEIWDTSIQLVRTCLVLNWDQDKKIEKACASFVEIRTNGLIRDFLRIDLAKSPISYTGKRNDLPGSGLISENGSDRANGNPFSSIYSYSKATIQESLNPNQGTIHTLLNRNKESQSLIILSSSNCSRIGPFNDVKYPNVIKDSIKKDPLIPIRNSLGPLGTGFPIYHFDLFSHLITHNQILVTNYLQLDNLKQIFQILKYYLLDENGKIYNPYSCSNIILNPFKLNWYFLHYNYCEETSTIVSLGQFLCENVCIAKKGPHLKSGQVLILQVDSVVIRSAKPYLATPGATVHGHYGEILYEGDTLVTFIYEKSRSGDITQGLPKVEQVLEVRSIDSISMNLEKRIEGWNKCITRILGIPWAFFIGAKLTIVQSRISLVNKVQKVYRSQGVQIHNRHIEIIVRQITSKVLVSEDEMSNVFSPGELIGLLRAERMGRALEEAICYQAVLLGITRASMNTQSFISEASFQETARVLAKAALLGRIDWLKGLKENVVLGGMIPVGSGFKTPSSEPNNIPNNIAFELKKKNLLEGEMKDILFYHRK</sequence>
<feature type="chain" id="PRO_0000277192" description="DNA-directed RNA polymerase subunit beta''">
    <location>
        <begin position="1"/>
        <end position="1362"/>
    </location>
</feature>
<feature type="binding site" evidence="1">
    <location>
        <position position="224"/>
    </location>
    <ligand>
        <name>Zn(2+)</name>
        <dbReference type="ChEBI" id="CHEBI:29105"/>
    </ligand>
</feature>
<feature type="binding site" evidence="1">
    <location>
        <position position="295"/>
    </location>
    <ligand>
        <name>Zn(2+)</name>
        <dbReference type="ChEBI" id="CHEBI:29105"/>
    </ligand>
</feature>
<feature type="binding site" evidence="1">
    <location>
        <position position="302"/>
    </location>
    <ligand>
        <name>Zn(2+)</name>
        <dbReference type="ChEBI" id="CHEBI:29105"/>
    </ligand>
</feature>
<feature type="binding site" evidence="1">
    <location>
        <position position="305"/>
    </location>
    <ligand>
        <name>Zn(2+)</name>
        <dbReference type="ChEBI" id="CHEBI:29105"/>
    </ligand>
</feature>
<name>RPOC2_HELAN</name>
<geneLocation type="chloroplast"/>
<dbReference type="EC" id="2.7.7.6" evidence="1"/>
<dbReference type="EMBL" id="DQ383815">
    <property type="protein sequence ID" value="ABD47135.1"/>
    <property type="molecule type" value="Genomic_DNA"/>
</dbReference>
<dbReference type="RefSeq" id="YP_588106.1">
    <property type="nucleotide sequence ID" value="NC_007977.1"/>
</dbReference>
<dbReference type="SMR" id="Q1KXX0"/>
<dbReference type="GeneID" id="4055574"/>
<dbReference type="KEGG" id="han:4055574"/>
<dbReference type="OrthoDB" id="498011at2759"/>
<dbReference type="PhylomeDB" id="Q1KXX0"/>
<dbReference type="GO" id="GO:0009507">
    <property type="term" value="C:chloroplast"/>
    <property type="evidence" value="ECO:0007669"/>
    <property type="project" value="UniProtKB-SubCell"/>
</dbReference>
<dbReference type="GO" id="GO:0000428">
    <property type="term" value="C:DNA-directed RNA polymerase complex"/>
    <property type="evidence" value="ECO:0007669"/>
    <property type="project" value="UniProtKB-KW"/>
</dbReference>
<dbReference type="GO" id="GO:0005739">
    <property type="term" value="C:mitochondrion"/>
    <property type="evidence" value="ECO:0007669"/>
    <property type="project" value="GOC"/>
</dbReference>
<dbReference type="GO" id="GO:0003677">
    <property type="term" value="F:DNA binding"/>
    <property type="evidence" value="ECO:0007669"/>
    <property type="project" value="UniProtKB-UniRule"/>
</dbReference>
<dbReference type="GO" id="GO:0003899">
    <property type="term" value="F:DNA-directed RNA polymerase activity"/>
    <property type="evidence" value="ECO:0007669"/>
    <property type="project" value="UniProtKB-UniRule"/>
</dbReference>
<dbReference type="GO" id="GO:0008270">
    <property type="term" value="F:zinc ion binding"/>
    <property type="evidence" value="ECO:0007669"/>
    <property type="project" value="UniProtKB-UniRule"/>
</dbReference>
<dbReference type="GO" id="GO:0006351">
    <property type="term" value="P:DNA-templated transcription"/>
    <property type="evidence" value="ECO:0007669"/>
    <property type="project" value="UniProtKB-UniRule"/>
</dbReference>
<dbReference type="CDD" id="cd02655">
    <property type="entry name" value="RNAP_beta'_C"/>
    <property type="match status" value="1"/>
</dbReference>
<dbReference type="FunFam" id="1.10.132.30:FF:000002">
    <property type="entry name" value="DNA-directed RNA polymerase subunit beta"/>
    <property type="match status" value="1"/>
</dbReference>
<dbReference type="Gene3D" id="1.10.132.30">
    <property type="match status" value="1"/>
</dbReference>
<dbReference type="Gene3D" id="1.10.150.390">
    <property type="match status" value="1"/>
</dbReference>
<dbReference type="Gene3D" id="1.10.1790.20">
    <property type="match status" value="1"/>
</dbReference>
<dbReference type="Gene3D" id="1.10.274.100">
    <property type="entry name" value="RNA polymerase Rpb1, domain 3"/>
    <property type="match status" value="1"/>
</dbReference>
<dbReference type="HAMAP" id="MF_01324">
    <property type="entry name" value="RNApol_bact_RpoC2"/>
    <property type="match status" value="1"/>
</dbReference>
<dbReference type="InterPro" id="IPR012756">
    <property type="entry name" value="DNA-dir_RpoC2_beta_pp"/>
</dbReference>
<dbReference type="InterPro" id="IPR050254">
    <property type="entry name" value="RNA_pol_beta''_euk"/>
</dbReference>
<dbReference type="InterPro" id="IPR042102">
    <property type="entry name" value="RNA_pol_Rpb1_3_sf"/>
</dbReference>
<dbReference type="InterPro" id="IPR007083">
    <property type="entry name" value="RNA_pol_Rpb1_4"/>
</dbReference>
<dbReference type="InterPro" id="IPR007081">
    <property type="entry name" value="RNA_pol_Rpb1_5"/>
</dbReference>
<dbReference type="InterPro" id="IPR038120">
    <property type="entry name" value="Rpb1_funnel_sf"/>
</dbReference>
<dbReference type="NCBIfam" id="TIGR02388">
    <property type="entry name" value="rpoC2_cyan"/>
    <property type="match status" value="1"/>
</dbReference>
<dbReference type="PANTHER" id="PTHR34995">
    <property type="entry name" value="DNA-DIRECTED RNA POLYMERASE SUBUNIT BETA"/>
    <property type="match status" value="1"/>
</dbReference>
<dbReference type="PANTHER" id="PTHR34995:SF1">
    <property type="entry name" value="DNA-DIRECTED RNA POLYMERASE SUBUNIT BETA"/>
    <property type="match status" value="1"/>
</dbReference>
<dbReference type="Pfam" id="PF05000">
    <property type="entry name" value="RNA_pol_Rpb1_4"/>
    <property type="match status" value="1"/>
</dbReference>
<dbReference type="Pfam" id="PF04998">
    <property type="entry name" value="RNA_pol_Rpb1_5"/>
    <property type="match status" value="2"/>
</dbReference>
<dbReference type="SUPFAM" id="SSF64484">
    <property type="entry name" value="beta and beta-prime subunits of DNA dependent RNA-polymerase"/>
    <property type="match status" value="1"/>
</dbReference>
<organism>
    <name type="scientific">Helianthus annuus</name>
    <name type="common">Common sunflower</name>
    <dbReference type="NCBI Taxonomy" id="4232"/>
    <lineage>
        <taxon>Eukaryota</taxon>
        <taxon>Viridiplantae</taxon>
        <taxon>Streptophyta</taxon>
        <taxon>Embryophyta</taxon>
        <taxon>Tracheophyta</taxon>
        <taxon>Spermatophyta</taxon>
        <taxon>Magnoliopsida</taxon>
        <taxon>eudicotyledons</taxon>
        <taxon>Gunneridae</taxon>
        <taxon>Pentapetalae</taxon>
        <taxon>asterids</taxon>
        <taxon>campanulids</taxon>
        <taxon>Asterales</taxon>
        <taxon>Asteraceae</taxon>
        <taxon>Asteroideae</taxon>
        <taxon>Heliantheae alliance</taxon>
        <taxon>Heliantheae</taxon>
        <taxon>Helianthus</taxon>
    </lineage>
</organism>
<accession>Q1KXX0</accession>
<gene>
    <name evidence="1" type="primary">rpoC2</name>
</gene>
<proteinExistence type="inferred from homology"/>
<protein>
    <recommendedName>
        <fullName evidence="1">DNA-directed RNA polymerase subunit beta''</fullName>
        <ecNumber evidence="1">2.7.7.6</ecNumber>
    </recommendedName>
    <alternativeName>
        <fullName evidence="1">PEP</fullName>
    </alternativeName>
    <alternativeName>
        <fullName evidence="1">Plastid-encoded RNA polymerase subunit beta''</fullName>
        <shortName evidence="1">RNA polymerase subunit beta''</shortName>
    </alternativeName>
</protein>
<comment type="function">
    <text evidence="1">DNA-dependent RNA polymerase catalyzes the transcription of DNA into RNA using the four ribonucleoside triphosphates as substrates.</text>
</comment>
<comment type="catalytic activity">
    <reaction evidence="1">
        <text>RNA(n) + a ribonucleoside 5'-triphosphate = RNA(n+1) + diphosphate</text>
        <dbReference type="Rhea" id="RHEA:21248"/>
        <dbReference type="Rhea" id="RHEA-COMP:14527"/>
        <dbReference type="Rhea" id="RHEA-COMP:17342"/>
        <dbReference type="ChEBI" id="CHEBI:33019"/>
        <dbReference type="ChEBI" id="CHEBI:61557"/>
        <dbReference type="ChEBI" id="CHEBI:140395"/>
        <dbReference type="EC" id="2.7.7.6"/>
    </reaction>
</comment>
<comment type="cofactor">
    <cofactor evidence="1">
        <name>Zn(2+)</name>
        <dbReference type="ChEBI" id="CHEBI:29105"/>
    </cofactor>
    <text evidence="1">Binds 1 Zn(2+) ion per subunit.</text>
</comment>
<comment type="subunit">
    <text evidence="1">In plastids the minimal PEP RNA polymerase catalytic core is composed of four subunits: alpha, beta, beta', and beta''. When a (nuclear-encoded) sigma factor is associated with the core the holoenzyme is formed, which can initiate transcription.</text>
</comment>
<comment type="subcellular location">
    <subcellularLocation>
        <location evidence="1">Plastid</location>
        <location evidence="1">Chloroplast</location>
    </subcellularLocation>
</comment>
<comment type="similarity">
    <text evidence="1">Belongs to the RNA polymerase beta' chain family. RpoC2 subfamily.</text>
</comment>
<reference key="1">
    <citation type="submission" date="2006-01" db="EMBL/GenBank/DDBJ databases">
        <title>A comparison of the first two published chloroplast genomes in Asteraceae: Lactuca and Helianthus.</title>
        <authorList>
            <person name="Timme R.E."/>
            <person name="Kuehl J.V."/>
            <person name="Boore J.L."/>
            <person name="Jansen R.K."/>
        </authorList>
    </citation>
    <scope>NUCLEOTIDE SEQUENCE [LARGE SCALE GENOMIC DNA]</scope>
    <source>
        <strain>cv. HA383</strain>
    </source>
</reference>